<keyword id="KW-1185">Reference proteome</keyword>
<keyword id="KW-0686">Riboflavin biosynthesis</keyword>
<keyword id="KW-0808">Transferase</keyword>
<evidence type="ECO:0000255" key="1">
    <source>
        <dbReference type="HAMAP-Rule" id="MF_00178"/>
    </source>
</evidence>
<organism>
    <name type="scientific">Shouchella clausii (strain KSM-K16)</name>
    <name type="common">Alkalihalobacillus clausii</name>
    <dbReference type="NCBI Taxonomy" id="66692"/>
    <lineage>
        <taxon>Bacteria</taxon>
        <taxon>Bacillati</taxon>
        <taxon>Bacillota</taxon>
        <taxon>Bacilli</taxon>
        <taxon>Bacillales</taxon>
        <taxon>Bacillaceae</taxon>
        <taxon>Shouchella</taxon>
    </lineage>
</organism>
<protein>
    <recommendedName>
        <fullName evidence="1">6,7-dimethyl-8-ribityllumazine synthase</fullName>
        <shortName evidence="1">DMRL synthase</shortName>
        <shortName evidence="1">LS</shortName>
        <shortName evidence="1">Lumazine synthase</shortName>
        <ecNumber evidence="1">2.5.1.78</ecNumber>
    </recommendedName>
</protein>
<gene>
    <name evidence="1" type="primary">ribH</name>
    <name type="ordered locus">ABC1813</name>
</gene>
<comment type="function">
    <text evidence="1">Catalyzes the formation of 6,7-dimethyl-8-ribityllumazine by condensation of 5-amino-6-(D-ribitylamino)uracil with 3,4-dihydroxy-2-butanone 4-phosphate. This is the penultimate step in the biosynthesis of riboflavin.</text>
</comment>
<comment type="catalytic activity">
    <reaction evidence="1">
        <text>(2S)-2-hydroxy-3-oxobutyl phosphate + 5-amino-6-(D-ribitylamino)uracil = 6,7-dimethyl-8-(1-D-ribityl)lumazine + phosphate + 2 H2O + H(+)</text>
        <dbReference type="Rhea" id="RHEA:26152"/>
        <dbReference type="ChEBI" id="CHEBI:15377"/>
        <dbReference type="ChEBI" id="CHEBI:15378"/>
        <dbReference type="ChEBI" id="CHEBI:15934"/>
        <dbReference type="ChEBI" id="CHEBI:43474"/>
        <dbReference type="ChEBI" id="CHEBI:58201"/>
        <dbReference type="ChEBI" id="CHEBI:58830"/>
        <dbReference type="EC" id="2.5.1.78"/>
    </reaction>
</comment>
<comment type="pathway">
    <text evidence="1">Cofactor biosynthesis; riboflavin biosynthesis; riboflavin from 2-hydroxy-3-oxobutyl phosphate and 5-amino-6-(D-ribitylamino)uracil: step 1/2.</text>
</comment>
<comment type="subunit">
    <text evidence="1">Forms an icosahedral capsid composed of 60 subunits, arranged as a dodecamer of pentamers.</text>
</comment>
<comment type="similarity">
    <text evidence="1">Belongs to the DMRL synthase family.</text>
</comment>
<proteinExistence type="inferred from homology"/>
<feature type="chain" id="PRO_1000040371" description="6,7-dimethyl-8-ribityllumazine synthase">
    <location>
        <begin position="1"/>
        <end position="156"/>
    </location>
</feature>
<feature type="active site" description="Proton donor" evidence="1">
    <location>
        <position position="89"/>
    </location>
</feature>
<feature type="binding site" evidence="1">
    <location>
        <position position="23"/>
    </location>
    <ligand>
        <name>5-amino-6-(D-ribitylamino)uracil</name>
        <dbReference type="ChEBI" id="CHEBI:15934"/>
    </ligand>
</feature>
<feature type="binding site" evidence="1">
    <location>
        <begin position="57"/>
        <end position="59"/>
    </location>
    <ligand>
        <name>5-amino-6-(D-ribitylamino)uracil</name>
        <dbReference type="ChEBI" id="CHEBI:15934"/>
    </ligand>
</feature>
<feature type="binding site" evidence="1">
    <location>
        <begin position="81"/>
        <end position="83"/>
    </location>
    <ligand>
        <name>5-amino-6-(D-ribitylamino)uracil</name>
        <dbReference type="ChEBI" id="CHEBI:15934"/>
    </ligand>
</feature>
<feature type="binding site" evidence="1">
    <location>
        <begin position="86"/>
        <end position="87"/>
    </location>
    <ligand>
        <name>(2S)-2-hydroxy-3-oxobutyl phosphate</name>
        <dbReference type="ChEBI" id="CHEBI:58830"/>
    </ligand>
</feature>
<feature type="binding site" evidence="1">
    <location>
        <position position="114"/>
    </location>
    <ligand>
        <name>5-amino-6-(D-ribitylamino)uracil</name>
        <dbReference type="ChEBI" id="CHEBI:15934"/>
    </ligand>
</feature>
<feature type="binding site" evidence="1">
    <location>
        <position position="128"/>
    </location>
    <ligand>
        <name>(2S)-2-hydroxy-3-oxobutyl phosphate</name>
        <dbReference type="ChEBI" id="CHEBI:58830"/>
    </ligand>
</feature>
<sequence>MGKNYEGHLVASGLKVGIVVGRFNEFITSKLLGGAQDGLIRHGADEGDIDVAWVPGAFEIPFAAKKMAESGRYDAVITLGTVIRGSTPHFDYVCNEVAKGVSSLALTTGIPVIFGVLTTDTIEQAVERAGTKAGNKGWEAASAAIEMANLAKQFEE</sequence>
<name>RISB_SHOC1</name>
<reference key="1">
    <citation type="submission" date="2003-10" db="EMBL/GenBank/DDBJ databases">
        <title>The complete genome sequence of the alkaliphilic Bacillus clausii KSM-K16.</title>
        <authorList>
            <person name="Takaki Y."/>
            <person name="Kageyama Y."/>
            <person name="Shimamura S."/>
            <person name="Suzuki H."/>
            <person name="Nishi S."/>
            <person name="Hatada Y."/>
            <person name="Kawai S."/>
            <person name="Ito S."/>
            <person name="Horikoshi K."/>
        </authorList>
    </citation>
    <scope>NUCLEOTIDE SEQUENCE [LARGE SCALE GENOMIC DNA]</scope>
    <source>
        <strain>KSM-K16</strain>
    </source>
</reference>
<dbReference type="EC" id="2.5.1.78" evidence="1"/>
<dbReference type="EMBL" id="AP006627">
    <property type="protein sequence ID" value="BAD64348.1"/>
    <property type="molecule type" value="Genomic_DNA"/>
</dbReference>
<dbReference type="SMR" id="Q5WH07"/>
<dbReference type="STRING" id="66692.ABC1813"/>
<dbReference type="KEGG" id="bcl:ABC1813"/>
<dbReference type="eggNOG" id="COG0054">
    <property type="taxonomic scope" value="Bacteria"/>
</dbReference>
<dbReference type="HOGENOM" id="CLU_089358_1_1_9"/>
<dbReference type="OrthoDB" id="9809709at2"/>
<dbReference type="UniPathway" id="UPA00275">
    <property type="reaction ID" value="UER00404"/>
</dbReference>
<dbReference type="Proteomes" id="UP000001168">
    <property type="component" value="Chromosome"/>
</dbReference>
<dbReference type="GO" id="GO:0005829">
    <property type="term" value="C:cytosol"/>
    <property type="evidence" value="ECO:0007669"/>
    <property type="project" value="TreeGrafter"/>
</dbReference>
<dbReference type="GO" id="GO:0009349">
    <property type="term" value="C:riboflavin synthase complex"/>
    <property type="evidence" value="ECO:0007669"/>
    <property type="project" value="InterPro"/>
</dbReference>
<dbReference type="GO" id="GO:0000906">
    <property type="term" value="F:6,7-dimethyl-8-ribityllumazine synthase activity"/>
    <property type="evidence" value="ECO:0007669"/>
    <property type="project" value="UniProtKB-UniRule"/>
</dbReference>
<dbReference type="GO" id="GO:0009231">
    <property type="term" value="P:riboflavin biosynthetic process"/>
    <property type="evidence" value="ECO:0007669"/>
    <property type="project" value="UniProtKB-UniRule"/>
</dbReference>
<dbReference type="CDD" id="cd09209">
    <property type="entry name" value="Lumazine_synthase-I"/>
    <property type="match status" value="1"/>
</dbReference>
<dbReference type="FunFam" id="3.40.50.960:FF:000001">
    <property type="entry name" value="6,7-dimethyl-8-ribityllumazine synthase"/>
    <property type="match status" value="1"/>
</dbReference>
<dbReference type="Gene3D" id="3.40.50.960">
    <property type="entry name" value="Lumazine/riboflavin synthase"/>
    <property type="match status" value="1"/>
</dbReference>
<dbReference type="HAMAP" id="MF_00178">
    <property type="entry name" value="Lumazine_synth"/>
    <property type="match status" value="1"/>
</dbReference>
<dbReference type="InterPro" id="IPR034964">
    <property type="entry name" value="LS"/>
</dbReference>
<dbReference type="InterPro" id="IPR002180">
    <property type="entry name" value="LS/RS"/>
</dbReference>
<dbReference type="InterPro" id="IPR036467">
    <property type="entry name" value="LS/RS_sf"/>
</dbReference>
<dbReference type="NCBIfam" id="TIGR00114">
    <property type="entry name" value="lumazine-synth"/>
    <property type="match status" value="1"/>
</dbReference>
<dbReference type="NCBIfam" id="NF000812">
    <property type="entry name" value="PRK00061.1-4"/>
    <property type="match status" value="1"/>
</dbReference>
<dbReference type="PANTHER" id="PTHR21058:SF0">
    <property type="entry name" value="6,7-DIMETHYL-8-RIBITYLLUMAZINE SYNTHASE"/>
    <property type="match status" value="1"/>
</dbReference>
<dbReference type="PANTHER" id="PTHR21058">
    <property type="entry name" value="6,7-DIMETHYL-8-RIBITYLLUMAZINE SYNTHASE DMRL SYNTHASE LUMAZINE SYNTHASE"/>
    <property type="match status" value="1"/>
</dbReference>
<dbReference type="Pfam" id="PF00885">
    <property type="entry name" value="DMRL_synthase"/>
    <property type="match status" value="1"/>
</dbReference>
<dbReference type="SUPFAM" id="SSF52121">
    <property type="entry name" value="Lumazine synthase"/>
    <property type="match status" value="1"/>
</dbReference>
<accession>Q5WH07</accession>